<evidence type="ECO:0000250" key="1"/>
<evidence type="ECO:0000250" key="2">
    <source>
        <dbReference type="UniProtKB" id="P15436"/>
    </source>
</evidence>
<evidence type="ECO:0000305" key="3"/>
<protein>
    <recommendedName>
        <fullName>DNA polymerase epsilon catalytic subunit A</fullName>
        <ecNumber evidence="2">2.7.7.7</ecNumber>
    </recommendedName>
    <alternativeName>
        <fullName>DNA polymerase II subunit A</fullName>
    </alternativeName>
</protein>
<gene>
    <name type="primary">POL2</name>
    <name type="ordered locus">KLLA0C02585g</name>
</gene>
<sequence length="2185" mass="252061">MSAFKGSTTAKFVGRGNEYPTQANSFAQVAQQLLNSKKVDEIDEMMGFPRFIPSPALSDSKVGWLSNMHPTIISQEMLEEEGNLHSATVSGISGVDFYFIDEEGGSFKTTVTYDPYFFVSCTDETRIHDIEEYLKKTLEQCIKKVELVLKDDLAMNNHLVGLKKHLIKLSFSNSNQLFEARRILRPILKINEDENGKKDIYNTGSDYSTRDVKTLIEDIREYDVPYHVRVSIDKNIRVGKWYAVSAQGLVELEEKVTFADPVVLAFDIETTKAPLKFPDSAIDQIMMISYMIDGEGFLITNREIISEDIEDFEYTPKDEYKGQFAIFNEPDEMALLQRFFEHIRDVRPTVISTFNGDFFDWPFVENRAKFHGLNMFDEIGFAPDSEGEYKSSYCTHMDCFRWVKRDSYLPQGSQGLKAVTQAKLGYNPLELDPELMTPYAYEKPQILSEYSVSDAVATYYLYMKYVHPFIFSLCTIIPLNPDEVLRKGTGTLCEMLLMVQAYQNSVLLPNKHTDPIERFYDGHLLESETYVGGHVESLEAGVFRSDLKNDFKIDPTVIDILLEDLPYALKFCIEVENNGNMEDVTNFEEIKQQITAQLTDLKINNKRNELPLIYHVDVASMYPNIMTTNRLQPDSMKDEKDCASCDFNRPGKSCDRRLKWAWRGEFFPAKMDEYGMVKRALQNELFPNKNPKSKKQFLTFEELSYSDQVSHIKKRLTDYSRKVYHRVKVTETVEREAIVCQRENPFYVNTVRSFRDRRYEFKGLAKLWKGKLSKIKPDDVHSKDEAKKMIVLYDSLQLAHKVILNSFYGYVMRKGSRWYSMEMAGITCLTGANIIQMARSVVERIGRPLELDTDGIWCILPKSFPENFEIKLRNGKKLFLSYPCSMLNYKVHQKYTNHQYQDLVDPMKFKYQTKSDNSIFFEVDGPYKAMILPTSKEEGKGIKKRYAVFNEDGSLAELKGFELKRRGELQLIKNFQSDIFKLFLEGTTLESCYAAVATVANRWLDVLDSKGAMLETEDLIELICENKSMSKTLKEYQGQKSTSITTARRLGEFLGEAMVKDAGLQCKFIISSKPHNAPVTERAIPVAIFSSDLHVKRTFLRRWLLDSSLNDFDPRAIIDWDYYRERLASVVQKIITIPAALQNIKNPVPRVEHPDWLRKKIAVSEDKFKQTSLNRFFKSTKAPPEVKDIEDSFDEHSANKSRIAKVTYKRKSKRRNGDTALEEESLLLPSEMPPMLDDYVGWLQYQKTKWKIQHIDRKKREKLFGKTSRASDRSALGNLIRKHVESYADKSWEILQCKPSIDLGVVEIYALIDRKIQLLKVNIPKTVLMNFKTENFPSGGIENCIVEKSNAELPNVKGINNESSSQLFKLTMSEDTYFNEVNKASSVLNNENVLGIYESSISSNERVIMRLGTCIQFSSEKMGALGKGLQNGFHMKNLHPVEADRYLQRFDLDIAYLLHFVTDIGYEFYFLYKAWEDVVEIFVLKPSTHAQEVSNKAIESLYNEIYEKKFEKLDKYYDLIKINKNVSFNVNDYTELKRLLKDLSKMLQNIKEEKGSHTMVILQSPYTHRVAKLLQPLNAFPVVEIATAETHLPALNWQGQLMRKAVNHILSLGSWISNLITLSKYSNIPICNLKVDNLGYIIDLMYARQLKKNNIVLWWNDKSPLPDHGGVERDFDPRKAELMTDLVFPIMNNPDIYDDVIFEISVYNSVVNTVLSSTMLNEAEGTDLAQNSTSKEESFGFVEDSFSSSALSVLRALLKELWDDALGDNITADSLVHAFIGWVYNPDAKLFDYALRYHIHTLTQKAVLQLINEFKLAGSSLIFADRNKLLIKTQKRSVENSYAYGQYLMKAIRSKPMFAYLDLKIDRYWDVLIWMDKYNYGGRACLQIEDKEVQSFQAYSHWHIKDFLPAIYQQEFDDWLVVILDSMVKTKEAYHERNASTQRLTQLPKNTLADSDVDSQTDSLGGFTHNFSKALIKRAEKLYKNQQEYILDPNFGKDYLSPTIPGSHLVVKNPLLELVKYLSHILSLSSNHLLEGRALRKELLKTFEIREFDRLAEFKDPSTSFVIPSFICEHCSYISDIDICRESMERVFICQSCNRSLNKNLIEEHVIERLQAQVASFITQDVKCNKCHKIKEDAMSPYCPCSGKWELAVSKESFMAQLQIFKNLAESFDFRTLKETLNDFL</sequence>
<reference key="1">
    <citation type="journal article" date="2004" name="Nature">
        <title>Genome evolution in yeasts.</title>
        <authorList>
            <person name="Dujon B."/>
            <person name="Sherman D."/>
            <person name="Fischer G."/>
            <person name="Durrens P."/>
            <person name="Casaregola S."/>
            <person name="Lafontaine I."/>
            <person name="de Montigny J."/>
            <person name="Marck C."/>
            <person name="Neuveglise C."/>
            <person name="Talla E."/>
            <person name="Goffard N."/>
            <person name="Frangeul L."/>
            <person name="Aigle M."/>
            <person name="Anthouard V."/>
            <person name="Babour A."/>
            <person name="Barbe V."/>
            <person name="Barnay S."/>
            <person name="Blanchin S."/>
            <person name="Beckerich J.-M."/>
            <person name="Beyne E."/>
            <person name="Bleykasten C."/>
            <person name="Boisrame A."/>
            <person name="Boyer J."/>
            <person name="Cattolico L."/>
            <person name="Confanioleri F."/>
            <person name="de Daruvar A."/>
            <person name="Despons L."/>
            <person name="Fabre E."/>
            <person name="Fairhead C."/>
            <person name="Ferry-Dumazet H."/>
            <person name="Groppi A."/>
            <person name="Hantraye F."/>
            <person name="Hennequin C."/>
            <person name="Jauniaux N."/>
            <person name="Joyet P."/>
            <person name="Kachouri R."/>
            <person name="Kerrest A."/>
            <person name="Koszul R."/>
            <person name="Lemaire M."/>
            <person name="Lesur I."/>
            <person name="Ma L."/>
            <person name="Muller H."/>
            <person name="Nicaud J.-M."/>
            <person name="Nikolski M."/>
            <person name="Oztas S."/>
            <person name="Ozier-Kalogeropoulos O."/>
            <person name="Pellenz S."/>
            <person name="Potier S."/>
            <person name="Richard G.-F."/>
            <person name="Straub M.-L."/>
            <person name="Suleau A."/>
            <person name="Swennen D."/>
            <person name="Tekaia F."/>
            <person name="Wesolowski-Louvel M."/>
            <person name="Westhof E."/>
            <person name="Wirth B."/>
            <person name="Zeniou-Meyer M."/>
            <person name="Zivanovic Y."/>
            <person name="Bolotin-Fukuhara M."/>
            <person name="Thierry A."/>
            <person name="Bouchier C."/>
            <person name="Caudron B."/>
            <person name="Scarpelli C."/>
            <person name="Gaillardin C."/>
            <person name="Weissenbach J."/>
            <person name="Wincker P."/>
            <person name="Souciet J.-L."/>
        </authorList>
    </citation>
    <scope>NUCLEOTIDE SEQUENCE [LARGE SCALE GENOMIC DNA]</scope>
    <source>
        <strain>ATCC 8585 / CBS 2359 / DSM 70799 / NBRC 1267 / NRRL Y-1140 / WM37</strain>
    </source>
</reference>
<organism>
    <name type="scientific">Kluyveromyces lactis (strain ATCC 8585 / CBS 2359 / DSM 70799 / NBRC 1267 / NRRL Y-1140 / WM37)</name>
    <name type="common">Yeast</name>
    <name type="synonym">Candida sphaerica</name>
    <dbReference type="NCBI Taxonomy" id="284590"/>
    <lineage>
        <taxon>Eukaryota</taxon>
        <taxon>Fungi</taxon>
        <taxon>Dikarya</taxon>
        <taxon>Ascomycota</taxon>
        <taxon>Saccharomycotina</taxon>
        <taxon>Saccharomycetes</taxon>
        <taxon>Saccharomycetales</taxon>
        <taxon>Saccharomycetaceae</taxon>
        <taxon>Kluyveromyces</taxon>
    </lineage>
</organism>
<accession>Q6CUS7</accession>
<name>DPOE_KLULA</name>
<dbReference type="EC" id="2.7.7.7" evidence="2"/>
<dbReference type="EMBL" id="CR382123">
    <property type="protein sequence ID" value="CAH01163.1"/>
    <property type="molecule type" value="Genomic_DNA"/>
</dbReference>
<dbReference type="RefSeq" id="XP_452312.1">
    <property type="nucleotide sequence ID" value="XM_452312.1"/>
</dbReference>
<dbReference type="SMR" id="Q6CUS7"/>
<dbReference type="FunCoup" id="Q6CUS7">
    <property type="interactions" value="776"/>
</dbReference>
<dbReference type="STRING" id="284590.Q6CUS7"/>
<dbReference type="PaxDb" id="284590-Q6CUS7"/>
<dbReference type="KEGG" id="kla:KLLA0_C02585g"/>
<dbReference type="eggNOG" id="KOG1798">
    <property type="taxonomic scope" value="Eukaryota"/>
</dbReference>
<dbReference type="HOGENOM" id="CLU_000556_0_1_1"/>
<dbReference type="InParanoid" id="Q6CUS7"/>
<dbReference type="OMA" id="MLDQCRY"/>
<dbReference type="Proteomes" id="UP000000598">
    <property type="component" value="Chromosome C"/>
</dbReference>
<dbReference type="GO" id="GO:0008622">
    <property type="term" value="C:epsilon DNA polymerase complex"/>
    <property type="evidence" value="ECO:0007669"/>
    <property type="project" value="InterPro"/>
</dbReference>
<dbReference type="GO" id="GO:0051539">
    <property type="term" value="F:4 iron, 4 sulfur cluster binding"/>
    <property type="evidence" value="ECO:0007669"/>
    <property type="project" value="UniProtKB-KW"/>
</dbReference>
<dbReference type="GO" id="GO:0003677">
    <property type="term" value="F:DNA binding"/>
    <property type="evidence" value="ECO:0007669"/>
    <property type="project" value="UniProtKB-KW"/>
</dbReference>
<dbReference type="GO" id="GO:0003887">
    <property type="term" value="F:DNA-directed DNA polymerase activity"/>
    <property type="evidence" value="ECO:0007669"/>
    <property type="project" value="UniProtKB-KW"/>
</dbReference>
<dbReference type="GO" id="GO:0000166">
    <property type="term" value="F:nucleotide binding"/>
    <property type="evidence" value="ECO:0007669"/>
    <property type="project" value="InterPro"/>
</dbReference>
<dbReference type="GO" id="GO:0008310">
    <property type="term" value="F:single-stranded DNA 3'-5' DNA exonuclease activity"/>
    <property type="evidence" value="ECO:0007669"/>
    <property type="project" value="TreeGrafter"/>
</dbReference>
<dbReference type="GO" id="GO:0008270">
    <property type="term" value="F:zinc ion binding"/>
    <property type="evidence" value="ECO:0007669"/>
    <property type="project" value="UniProtKB-KW"/>
</dbReference>
<dbReference type="GO" id="GO:0006287">
    <property type="term" value="P:base-excision repair, gap-filling"/>
    <property type="evidence" value="ECO:0007669"/>
    <property type="project" value="TreeGrafter"/>
</dbReference>
<dbReference type="GO" id="GO:0045004">
    <property type="term" value="P:DNA replication proofreading"/>
    <property type="evidence" value="ECO:0007669"/>
    <property type="project" value="TreeGrafter"/>
</dbReference>
<dbReference type="GO" id="GO:0006272">
    <property type="term" value="P:leading strand elongation"/>
    <property type="evidence" value="ECO:0007669"/>
    <property type="project" value="TreeGrafter"/>
</dbReference>
<dbReference type="GO" id="GO:0000278">
    <property type="term" value="P:mitotic cell cycle"/>
    <property type="evidence" value="ECO:0007669"/>
    <property type="project" value="TreeGrafter"/>
</dbReference>
<dbReference type="GO" id="GO:0006297">
    <property type="term" value="P:nucleotide-excision repair, DNA gap filling"/>
    <property type="evidence" value="ECO:0007669"/>
    <property type="project" value="TreeGrafter"/>
</dbReference>
<dbReference type="CDD" id="cd05779">
    <property type="entry name" value="DNA_polB_epsilon_exo"/>
    <property type="match status" value="1"/>
</dbReference>
<dbReference type="CDD" id="cd05535">
    <property type="entry name" value="POLBc_epsilon"/>
    <property type="match status" value="1"/>
</dbReference>
<dbReference type="FunFam" id="1.10.132.60:FF:000002">
    <property type="entry name" value="DNA polymerase epsilon catalytic subunit"/>
    <property type="match status" value="1"/>
</dbReference>
<dbReference type="FunFam" id="1.10.287.690:FF:000005">
    <property type="entry name" value="DNA polymerase epsilon catalytic subunit"/>
    <property type="match status" value="1"/>
</dbReference>
<dbReference type="FunFam" id="3.30.420.10:FF:000010">
    <property type="entry name" value="DNA polymerase epsilon catalytic subunit"/>
    <property type="match status" value="1"/>
</dbReference>
<dbReference type="FunFam" id="3.90.1600.10:FF:000006">
    <property type="entry name" value="DNA polymerase epsilon catalytic subunit"/>
    <property type="match status" value="1"/>
</dbReference>
<dbReference type="Gene3D" id="1.10.132.60">
    <property type="entry name" value="DNA polymerase family B, C-terminal domain"/>
    <property type="match status" value="1"/>
</dbReference>
<dbReference type="Gene3D" id="3.30.342.10">
    <property type="entry name" value="DNA Polymerase, chain B, domain 1"/>
    <property type="match status" value="1"/>
</dbReference>
<dbReference type="Gene3D" id="3.90.1600.10">
    <property type="entry name" value="Palm domain of DNA polymerase"/>
    <property type="match status" value="1"/>
</dbReference>
<dbReference type="Gene3D" id="3.30.420.10">
    <property type="entry name" value="Ribonuclease H-like superfamily/Ribonuclease H"/>
    <property type="match status" value="1"/>
</dbReference>
<dbReference type="InterPro" id="IPR006172">
    <property type="entry name" value="DNA-dir_DNA_pol_B"/>
</dbReference>
<dbReference type="InterPro" id="IPR006133">
    <property type="entry name" value="DNA-dir_DNA_pol_B_exonuc"/>
</dbReference>
<dbReference type="InterPro" id="IPR043502">
    <property type="entry name" value="DNA/RNA_pol_sf"/>
</dbReference>
<dbReference type="InterPro" id="IPR042087">
    <property type="entry name" value="DNA_pol_B_thumb"/>
</dbReference>
<dbReference type="InterPro" id="IPR013697">
    <property type="entry name" value="DNA_pol_e_suA_C"/>
</dbReference>
<dbReference type="InterPro" id="IPR023211">
    <property type="entry name" value="DNA_pol_palm_dom_sf"/>
</dbReference>
<dbReference type="InterPro" id="IPR029703">
    <property type="entry name" value="POL2"/>
</dbReference>
<dbReference type="InterPro" id="IPR055191">
    <property type="entry name" value="POL2_thumb"/>
</dbReference>
<dbReference type="InterPro" id="IPR012337">
    <property type="entry name" value="RNaseH-like_sf"/>
</dbReference>
<dbReference type="InterPro" id="IPR036397">
    <property type="entry name" value="RNaseH_sf"/>
</dbReference>
<dbReference type="InterPro" id="IPR054475">
    <property type="entry name" value="Znf-DPOE"/>
</dbReference>
<dbReference type="PANTHER" id="PTHR10670">
    <property type="entry name" value="DNA POLYMERASE EPSILON CATALYTIC SUBUNIT A"/>
    <property type="match status" value="1"/>
</dbReference>
<dbReference type="PANTHER" id="PTHR10670:SF0">
    <property type="entry name" value="DNA POLYMERASE EPSILON CATALYTIC SUBUNIT A"/>
    <property type="match status" value="1"/>
</dbReference>
<dbReference type="Pfam" id="PF03104">
    <property type="entry name" value="DNA_pol_B_exo1"/>
    <property type="match status" value="1"/>
</dbReference>
<dbReference type="Pfam" id="PF08490">
    <property type="entry name" value="DUF1744"/>
    <property type="match status" value="1"/>
</dbReference>
<dbReference type="Pfam" id="PF22634">
    <property type="entry name" value="POL2_thumb"/>
    <property type="match status" value="1"/>
</dbReference>
<dbReference type="Pfam" id="PF22912">
    <property type="entry name" value="zf-DPOE"/>
    <property type="match status" value="1"/>
</dbReference>
<dbReference type="SMART" id="SM01159">
    <property type="entry name" value="DUF1744"/>
    <property type="match status" value="1"/>
</dbReference>
<dbReference type="SMART" id="SM00486">
    <property type="entry name" value="POLBc"/>
    <property type="match status" value="1"/>
</dbReference>
<dbReference type="SUPFAM" id="SSF56672">
    <property type="entry name" value="DNA/RNA polymerases"/>
    <property type="match status" value="1"/>
</dbReference>
<dbReference type="SUPFAM" id="SSF53098">
    <property type="entry name" value="Ribonuclease H-like"/>
    <property type="match status" value="1"/>
</dbReference>
<comment type="function">
    <text evidence="1">DNA polymerase II participates in chromosomal DNA replication.</text>
</comment>
<comment type="catalytic activity">
    <reaction evidence="2">
        <text>DNA(n) + a 2'-deoxyribonucleoside 5'-triphosphate = DNA(n+1) + diphosphate</text>
        <dbReference type="Rhea" id="RHEA:22508"/>
        <dbReference type="Rhea" id="RHEA-COMP:17339"/>
        <dbReference type="Rhea" id="RHEA-COMP:17340"/>
        <dbReference type="ChEBI" id="CHEBI:33019"/>
        <dbReference type="ChEBI" id="CHEBI:61560"/>
        <dbReference type="ChEBI" id="CHEBI:173112"/>
        <dbReference type="EC" id="2.7.7.7"/>
    </reaction>
</comment>
<comment type="cofactor">
    <cofactor evidence="2">
        <name>[4Fe-4S] cluster</name>
        <dbReference type="ChEBI" id="CHEBI:49883"/>
    </cofactor>
    <text evidence="2">Binds 1 [4Fe-4S] cluster.</text>
</comment>
<comment type="subunit">
    <text evidence="1">Heterotetramer. Consists of 4 subunits: POL2, DPB2, DPB3 and DPB4 (By similarity).</text>
</comment>
<comment type="subcellular location">
    <subcellularLocation>
        <location evidence="1">Nucleus</location>
    </subcellularLocation>
</comment>
<comment type="domain">
    <text evidence="2">The CysA-type zinc finger is required for PCNA-binding.</text>
</comment>
<comment type="domain">
    <text evidence="2">The CysB motif binds 1 4Fe-4S cluster and is required for the formation of polymerase complexes.</text>
</comment>
<comment type="similarity">
    <text evidence="3">Belongs to the DNA polymerase type-B family.</text>
</comment>
<feature type="chain" id="PRO_0000046463" description="DNA polymerase epsilon catalytic subunit A">
    <location>
        <begin position="1"/>
        <end position="2185"/>
    </location>
</feature>
<feature type="zinc finger region" description="CysA-type" evidence="2">
    <location>
        <begin position="2072"/>
        <end position="2097"/>
    </location>
</feature>
<feature type="short sequence motif" description="CysB motif" evidence="2">
    <location>
        <begin position="2128"/>
        <end position="2145"/>
    </location>
</feature>
<feature type="binding site" evidence="2">
    <location>
        <position position="2072"/>
    </location>
    <ligand>
        <name>Zn(2+)</name>
        <dbReference type="ChEBI" id="CHEBI:29105"/>
    </ligand>
</feature>
<feature type="binding site" evidence="2">
    <location>
        <position position="2075"/>
    </location>
    <ligand>
        <name>Zn(2+)</name>
        <dbReference type="ChEBI" id="CHEBI:29105"/>
    </ligand>
</feature>
<feature type="binding site" evidence="2">
    <location>
        <position position="2094"/>
    </location>
    <ligand>
        <name>Zn(2+)</name>
        <dbReference type="ChEBI" id="CHEBI:29105"/>
    </ligand>
</feature>
<feature type="binding site" evidence="2">
    <location>
        <position position="2097"/>
    </location>
    <ligand>
        <name>Zn(2+)</name>
        <dbReference type="ChEBI" id="CHEBI:29105"/>
    </ligand>
</feature>
<feature type="binding site" evidence="2">
    <location>
        <position position="2128"/>
    </location>
    <ligand>
        <name>[4Fe-4S] cluster</name>
        <dbReference type="ChEBI" id="CHEBI:49883"/>
    </ligand>
</feature>
<feature type="binding site" evidence="2">
    <location>
        <position position="2131"/>
    </location>
    <ligand>
        <name>[4Fe-4S] cluster</name>
        <dbReference type="ChEBI" id="CHEBI:49883"/>
    </ligand>
</feature>
<feature type="binding site" evidence="2">
    <location>
        <position position="2143"/>
    </location>
    <ligand>
        <name>[4Fe-4S] cluster</name>
        <dbReference type="ChEBI" id="CHEBI:49883"/>
    </ligand>
</feature>
<feature type="binding site" evidence="2">
    <location>
        <position position="2145"/>
    </location>
    <ligand>
        <name>[4Fe-4S] cluster</name>
        <dbReference type="ChEBI" id="CHEBI:49883"/>
    </ligand>
</feature>
<proteinExistence type="inferred from homology"/>
<keyword id="KW-0004">4Fe-4S</keyword>
<keyword id="KW-0235">DNA replication</keyword>
<keyword id="KW-0238">DNA-binding</keyword>
<keyword id="KW-0239">DNA-directed DNA polymerase</keyword>
<keyword id="KW-0408">Iron</keyword>
<keyword id="KW-0411">Iron-sulfur</keyword>
<keyword id="KW-0479">Metal-binding</keyword>
<keyword id="KW-0548">Nucleotidyltransferase</keyword>
<keyword id="KW-0539">Nucleus</keyword>
<keyword id="KW-1185">Reference proteome</keyword>
<keyword id="KW-0808">Transferase</keyword>
<keyword id="KW-0862">Zinc</keyword>
<keyword id="KW-0863">Zinc-finger</keyword>